<feature type="chain" id="PRO_0000275786" description="Photosystem II reaction center protein I">
    <location>
        <begin position="1"/>
        <end position="36"/>
    </location>
</feature>
<feature type="transmembrane region" description="Helical" evidence="1">
    <location>
        <begin position="4"/>
        <end position="24"/>
    </location>
</feature>
<name>PSBI_CITSI</name>
<protein>
    <recommendedName>
        <fullName evidence="1">Photosystem II reaction center protein I</fullName>
        <shortName evidence="1">PSII-I</shortName>
    </recommendedName>
    <alternativeName>
        <fullName evidence="1">PSII 4.8 kDa protein</fullName>
    </alternativeName>
</protein>
<organism>
    <name type="scientific">Citrus sinensis</name>
    <name type="common">Sweet orange</name>
    <name type="synonym">Citrus aurantium var. sinensis</name>
    <dbReference type="NCBI Taxonomy" id="2711"/>
    <lineage>
        <taxon>Eukaryota</taxon>
        <taxon>Viridiplantae</taxon>
        <taxon>Streptophyta</taxon>
        <taxon>Embryophyta</taxon>
        <taxon>Tracheophyta</taxon>
        <taxon>Spermatophyta</taxon>
        <taxon>Magnoliopsida</taxon>
        <taxon>eudicotyledons</taxon>
        <taxon>Gunneridae</taxon>
        <taxon>Pentapetalae</taxon>
        <taxon>rosids</taxon>
        <taxon>malvids</taxon>
        <taxon>Sapindales</taxon>
        <taxon>Rutaceae</taxon>
        <taxon>Aurantioideae</taxon>
        <taxon>Citrus</taxon>
    </lineage>
</organism>
<proteinExistence type="inferred from homology"/>
<keyword id="KW-0150">Chloroplast</keyword>
<keyword id="KW-0472">Membrane</keyword>
<keyword id="KW-0602">Photosynthesis</keyword>
<keyword id="KW-0604">Photosystem II</keyword>
<keyword id="KW-0934">Plastid</keyword>
<keyword id="KW-0674">Reaction center</keyword>
<keyword id="KW-0793">Thylakoid</keyword>
<keyword id="KW-0812">Transmembrane</keyword>
<keyword id="KW-1133">Transmembrane helix</keyword>
<accession>Q09MJ4</accession>
<dbReference type="EMBL" id="DQ864733">
    <property type="protein sequence ID" value="ABI49004.1"/>
    <property type="molecule type" value="Genomic_DNA"/>
</dbReference>
<dbReference type="RefSeq" id="YP_740459.1">
    <property type="nucleotide sequence ID" value="NC_008334.1"/>
</dbReference>
<dbReference type="SMR" id="Q09MJ4"/>
<dbReference type="GeneID" id="4271154"/>
<dbReference type="KEGG" id="cit:4271154"/>
<dbReference type="OrthoDB" id="724916at71240"/>
<dbReference type="GO" id="GO:0009535">
    <property type="term" value="C:chloroplast thylakoid membrane"/>
    <property type="evidence" value="ECO:0007669"/>
    <property type="project" value="UniProtKB-SubCell"/>
</dbReference>
<dbReference type="GO" id="GO:0009539">
    <property type="term" value="C:photosystem II reaction center"/>
    <property type="evidence" value="ECO:0007669"/>
    <property type="project" value="InterPro"/>
</dbReference>
<dbReference type="GO" id="GO:0015979">
    <property type="term" value="P:photosynthesis"/>
    <property type="evidence" value="ECO:0007669"/>
    <property type="project" value="UniProtKB-UniRule"/>
</dbReference>
<dbReference type="HAMAP" id="MF_01316">
    <property type="entry name" value="PSII_PsbI"/>
    <property type="match status" value="1"/>
</dbReference>
<dbReference type="InterPro" id="IPR003686">
    <property type="entry name" value="PSII_PsbI"/>
</dbReference>
<dbReference type="InterPro" id="IPR037271">
    <property type="entry name" value="PSII_PsbI_sf"/>
</dbReference>
<dbReference type="NCBIfam" id="NF002735">
    <property type="entry name" value="PRK02655.1"/>
    <property type="match status" value="1"/>
</dbReference>
<dbReference type="PANTHER" id="PTHR35772">
    <property type="entry name" value="PHOTOSYSTEM II REACTION CENTER PROTEIN I"/>
    <property type="match status" value="1"/>
</dbReference>
<dbReference type="PANTHER" id="PTHR35772:SF1">
    <property type="entry name" value="PHOTOSYSTEM II REACTION CENTER PROTEIN I"/>
    <property type="match status" value="1"/>
</dbReference>
<dbReference type="Pfam" id="PF02532">
    <property type="entry name" value="PsbI"/>
    <property type="match status" value="1"/>
</dbReference>
<dbReference type="SUPFAM" id="SSF161041">
    <property type="entry name" value="Photosystem II reaction center protein I, PsbI"/>
    <property type="match status" value="1"/>
</dbReference>
<gene>
    <name evidence="1" type="primary">psbI</name>
</gene>
<geneLocation type="chloroplast"/>
<sequence length="36" mass="4168">MLTLKLFVYTVVIFFVSLFIFGFLSNDPGRNPGREE</sequence>
<comment type="function">
    <text evidence="1">One of the components of the core complex of photosystem II (PSII), required for its stability and/or assembly. PSII is a light-driven water:plastoquinone oxidoreductase that uses light energy to abstract electrons from H(2)O, generating O(2) and a proton gradient subsequently used for ATP formation. It consists of a core antenna complex that captures photons, and an electron transfer chain that converts photonic excitation into a charge separation.</text>
</comment>
<comment type="subunit">
    <text evidence="1">PSII is composed of 1 copy each of membrane proteins PsbA, PsbB, PsbC, PsbD, PsbE, PsbF, PsbH, PsbI, PsbJ, PsbK, PsbL, PsbM, PsbT, PsbX, PsbY, PsbZ, Psb30/Ycf12, at least 3 peripheral proteins of the oxygen-evolving complex and a large number of cofactors. It forms dimeric complexes.</text>
</comment>
<comment type="subcellular location">
    <subcellularLocation>
        <location evidence="1">Plastid</location>
        <location evidence="1">Chloroplast thylakoid membrane</location>
        <topology evidence="1">Single-pass membrane protein</topology>
    </subcellularLocation>
</comment>
<comment type="similarity">
    <text evidence="1">Belongs to the PsbI family.</text>
</comment>
<reference key="1">
    <citation type="journal article" date="2006" name="BMC Plant Biol.">
        <title>The complete chloroplast genome sequence of Citrus sinensis (L.) Osbeck var 'Ridge Pineapple': organization and phylogenetic relationships to other angiosperms.</title>
        <authorList>
            <person name="Bausher M.G."/>
            <person name="Singh N.D."/>
            <person name="Lee S.-B."/>
            <person name="Jansen R.K."/>
            <person name="Daniell H."/>
        </authorList>
    </citation>
    <scope>NUCLEOTIDE SEQUENCE [LARGE SCALE GENOMIC DNA]</scope>
    <source>
        <strain>cv. Osbeck var. Ridge Pineapple</strain>
    </source>
</reference>
<evidence type="ECO:0000255" key="1">
    <source>
        <dbReference type="HAMAP-Rule" id="MF_01316"/>
    </source>
</evidence>